<feature type="chain" id="PRO_0000405909" description="Phosphatidylethanolamine N-methyltransferase">
    <location>
        <begin position="1"/>
        <end position="856"/>
    </location>
</feature>
<feature type="topological domain" description="Lumenal" evidence="1">
    <location>
        <begin position="1"/>
        <end position="46"/>
    </location>
</feature>
<feature type="transmembrane region" description="Helical" evidence="1">
    <location>
        <begin position="47"/>
        <end position="67"/>
    </location>
</feature>
<feature type="topological domain" description="Cytoplasmic" evidence="1">
    <location>
        <begin position="68"/>
        <end position="73"/>
    </location>
</feature>
<feature type="transmembrane region" description="Helical" evidence="1">
    <location>
        <begin position="74"/>
        <end position="94"/>
    </location>
</feature>
<feature type="topological domain" description="Lumenal" evidence="1">
    <location>
        <begin position="95"/>
        <end position="155"/>
    </location>
</feature>
<feature type="transmembrane region" description="Helical" evidence="1">
    <location>
        <begin position="156"/>
        <end position="176"/>
    </location>
</feature>
<feature type="topological domain" description="Cytoplasmic" evidence="1">
    <location>
        <begin position="177"/>
        <end position="187"/>
    </location>
</feature>
<feature type="transmembrane region" description="Helical" evidence="1">
    <location>
        <begin position="188"/>
        <end position="208"/>
    </location>
</feature>
<feature type="topological domain" description="Lumenal" evidence="1">
    <location>
        <begin position="209"/>
        <end position="243"/>
    </location>
</feature>
<feature type="transmembrane region" description="Helical" evidence="1">
    <location>
        <begin position="244"/>
        <end position="264"/>
    </location>
</feature>
<feature type="topological domain" description="Cytoplasmic" evidence="1">
    <location>
        <begin position="265"/>
        <end position="266"/>
    </location>
</feature>
<feature type="transmembrane region" description="Helical" evidence="1">
    <location>
        <begin position="267"/>
        <end position="287"/>
    </location>
</feature>
<feature type="topological domain" description="Lumenal" evidence="1">
    <location>
        <begin position="288"/>
        <end position="336"/>
    </location>
</feature>
<feature type="transmembrane region" description="Helical" evidence="1">
    <location>
        <begin position="337"/>
        <end position="357"/>
    </location>
</feature>
<feature type="topological domain" description="Cytoplasmic" evidence="1">
    <location>
        <begin position="358"/>
        <end position="362"/>
    </location>
</feature>
<feature type="transmembrane region" description="Helical" evidence="1">
    <location>
        <begin position="363"/>
        <end position="383"/>
    </location>
</feature>
<feature type="topological domain" description="Lumenal" evidence="1">
    <location>
        <begin position="384"/>
        <end position="409"/>
    </location>
</feature>
<feature type="transmembrane region" description="Helical" evidence="1">
    <location>
        <begin position="410"/>
        <end position="430"/>
    </location>
</feature>
<feature type="topological domain" description="Cytoplasmic" evidence="1">
    <location>
        <begin position="431"/>
        <end position="439"/>
    </location>
</feature>
<feature type="transmembrane region" description="Helical" evidence="1">
    <location>
        <begin position="440"/>
        <end position="460"/>
    </location>
</feature>
<feature type="topological domain" description="Lumenal" evidence="1">
    <location>
        <begin position="461"/>
        <end position="508"/>
    </location>
</feature>
<feature type="transmembrane region" description="Helical" evidence="1">
    <location>
        <begin position="509"/>
        <end position="529"/>
    </location>
</feature>
<feature type="topological domain" description="Cytoplasmic" evidence="1">
    <location>
        <begin position="530"/>
        <end position="856"/>
    </location>
</feature>
<evidence type="ECO:0000255" key="1">
    <source>
        <dbReference type="HAMAP-Rule" id="MF_03217"/>
    </source>
</evidence>
<name>CHO2_PICST</name>
<protein>
    <recommendedName>
        <fullName evidence="1">Phosphatidylethanolamine N-methyltransferase</fullName>
        <shortName evidence="1">PE methyltransferase</shortName>
        <shortName evidence="1">PEAMT</shortName>
        <shortName evidence="1">PEMT</shortName>
        <ecNumber evidence="1">2.1.1.17</ecNumber>
    </recommendedName>
</protein>
<organism>
    <name type="scientific">Scheffersomyces stipitis (strain ATCC 58785 / CBS 6054 / NBRC 10063 / NRRL Y-11545)</name>
    <name type="common">Yeast</name>
    <name type="synonym">Pichia stipitis</name>
    <dbReference type="NCBI Taxonomy" id="322104"/>
    <lineage>
        <taxon>Eukaryota</taxon>
        <taxon>Fungi</taxon>
        <taxon>Dikarya</taxon>
        <taxon>Ascomycota</taxon>
        <taxon>Saccharomycotina</taxon>
        <taxon>Pichiomycetes</taxon>
        <taxon>Debaryomycetaceae</taxon>
        <taxon>Scheffersomyces</taxon>
    </lineage>
</organism>
<accession>A3LQW6</accession>
<comment type="function">
    <text evidence="1">Catalyzes the first step of the methylation pathway of phosphatidylcholine biosynthesis, the SAM-dependent methylation of phosphatidylethanolamine (PE) to phosphatidylmonomethylethanolamine (PMME).</text>
</comment>
<comment type="catalytic activity">
    <reaction evidence="1">
        <text>a 1,2-diacyl-sn-glycero-3-phosphoethanolamine + S-adenosyl-L-methionine = a 1,2-diacyl-sn-glycero-3-phospho-N-methylethanolamine + S-adenosyl-L-homocysteine + H(+)</text>
        <dbReference type="Rhea" id="RHEA:11164"/>
        <dbReference type="ChEBI" id="CHEBI:15378"/>
        <dbReference type="ChEBI" id="CHEBI:57856"/>
        <dbReference type="ChEBI" id="CHEBI:59789"/>
        <dbReference type="ChEBI" id="CHEBI:64573"/>
        <dbReference type="ChEBI" id="CHEBI:64612"/>
        <dbReference type="EC" id="2.1.1.17"/>
    </reaction>
</comment>
<comment type="pathway">
    <text evidence="1">Phospholipid metabolism; phosphatidylcholine biosynthesis.</text>
</comment>
<comment type="subcellular location">
    <subcellularLocation>
        <location evidence="1">Endoplasmic reticulum membrane</location>
        <topology evidence="1">Multi-pass membrane protein</topology>
    </subcellularLocation>
</comment>
<comment type="similarity">
    <text evidence="1">Belongs to the class VI-like SAM-binding methyltransferase superfamily. CHO2 family.</text>
</comment>
<sequence>MATKTKTASSAKVGPKGITFSGDTFVVPETHDMVKTLFDPTVRKSNLEFIILACLFSNLLVFWLVPENSLRIPIFIGFYIFWRLSYNFGIGYLLHNQSKYNRLVEWSRNLRLFDAKSNSALSKFIIAEIKSQRGAEYDIDSYPIEFNTWLVFRKFVDLVLMSDFVTFICVVWTCAINNNNEFLHDQKIWLVNTRLVVGFGLIVFNFWVKVNAHNTIKDYAWYWGDFFFRQINNEELIFDGVFEMVPHPMYSVGYIGYYGFALIAKSYTVLVIAIFGHFLQMIFLHYIENPHIDKIYGPSKNQINLFKLLKLRDLKNFDNLKPLVGLYNFNYLRGSDVMNLILVGTYAFVLPIFASSAGNRFDFVFFLAVGIKLLESFSINTLLTLQSHSKFFTKWYLSNDIPLEKSLNNWAVIYNSLINLTYASLFGLNFYQYLQGFTSELLFSQWLYLRVFVGLLLIFTQSWINSSIIDSIGYFGWFYGDFFIPKSYSSMQHLTKAGVYRYLNNPEQIFGVCGVMGVFIMVPSVENLVCCFLWVANNFVRINFIERWHMIKVYGEQEVLQDSGVTKTFKKHLIPEVISRRLSNDTENNQNIRRRKSSSFTITDSLDNFIKELKTSKTKLSKQKLIELSQSLSFENSDYKLNVSGLQATTEKDSEYLPNYVDVGSPIEVQWTSPKETHSERDWIGLYRIIQTSYSRNKTLLSSSGRWTFCKESSGKFTFAGNKLFWEEGVYEFRYHLNGSHDVAYISEPFEVRIPSVSVPLDDSKSDELAKDLQVKFFSKLLNTRSVDDSISEAASESDNVLEVYKLLSKIISQATNVSIGPKVFLQHDAPNTVATLSSKIIHIKKVLEELSNIQN</sequence>
<keyword id="KW-0256">Endoplasmic reticulum</keyword>
<keyword id="KW-0444">Lipid biosynthesis</keyword>
<keyword id="KW-0443">Lipid metabolism</keyword>
<keyword id="KW-0472">Membrane</keyword>
<keyword id="KW-0489">Methyltransferase</keyword>
<keyword id="KW-0594">Phospholipid biosynthesis</keyword>
<keyword id="KW-1208">Phospholipid metabolism</keyword>
<keyword id="KW-1185">Reference proteome</keyword>
<keyword id="KW-0949">S-adenosyl-L-methionine</keyword>
<keyword id="KW-0808">Transferase</keyword>
<keyword id="KW-0812">Transmembrane</keyword>
<keyword id="KW-1133">Transmembrane helix</keyword>
<reference key="1">
    <citation type="journal article" date="2007" name="Nat. Biotechnol.">
        <title>Genome sequence of the lignocellulose-bioconverting and xylose-fermenting yeast Pichia stipitis.</title>
        <authorList>
            <person name="Jeffries T.W."/>
            <person name="Grigoriev I.V."/>
            <person name="Grimwood J."/>
            <person name="Laplaza J.M."/>
            <person name="Aerts A."/>
            <person name="Salamov A."/>
            <person name="Schmutz J."/>
            <person name="Lindquist E."/>
            <person name="Dehal P."/>
            <person name="Shapiro H."/>
            <person name="Jin Y.-S."/>
            <person name="Passoth V."/>
            <person name="Richardson P.M."/>
        </authorList>
    </citation>
    <scope>NUCLEOTIDE SEQUENCE [LARGE SCALE GENOMIC DNA]</scope>
    <source>
        <strain>ATCC 58785 / CBS 6054 / NBRC 10063 / NRRL Y-11545</strain>
    </source>
</reference>
<proteinExistence type="inferred from homology"/>
<gene>
    <name type="primary">CHO2</name>
    <name type="ORF">PICST_57055</name>
</gene>
<dbReference type="EC" id="2.1.1.17" evidence="1"/>
<dbReference type="EMBL" id="CP000497">
    <property type="protein sequence ID" value="ABN65630.2"/>
    <property type="molecule type" value="Genomic_DNA"/>
</dbReference>
<dbReference type="RefSeq" id="XP_001383659.2">
    <property type="nucleotide sequence ID" value="XM_001383622.1"/>
</dbReference>
<dbReference type="FunCoup" id="A3LQW6">
    <property type="interactions" value="82"/>
</dbReference>
<dbReference type="STRING" id="322104.A3LQW6"/>
<dbReference type="GeneID" id="4838121"/>
<dbReference type="KEGG" id="pic:PICST_57055"/>
<dbReference type="eggNOG" id="ENOG502QRGH">
    <property type="taxonomic scope" value="Eukaryota"/>
</dbReference>
<dbReference type="HOGENOM" id="CLU_005987_0_1_1"/>
<dbReference type="InParanoid" id="A3LQW6"/>
<dbReference type="OMA" id="RIWYSVG"/>
<dbReference type="OrthoDB" id="4583at2759"/>
<dbReference type="UniPathway" id="UPA00753"/>
<dbReference type="Proteomes" id="UP000002258">
    <property type="component" value="Chromosome 3"/>
</dbReference>
<dbReference type="GO" id="GO:0005789">
    <property type="term" value="C:endoplasmic reticulum membrane"/>
    <property type="evidence" value="ECO:0007669"/>
    <property type="project" value="UniProtKB-SubCell"/>
</dbReference>
<dbReference type="GO" id="GO:0004608">
    <property type="term" value="F:phosphatidylethanolamine N-methyltransferase activity"/>
    <property type="evidence" value="ECO:0007669"/>
    <property type="project" value="UniProtKB-UniRule"/>
</dbReference>
<dbReference type="GO" id="GO:0032259">
    <property type="term" value="P:methylation"/>
    <property type="evidence" value="ECO:0007669"/>
    <property type="project" value="UniProtKB-KW"/>
</dbReference>
<dbReference type="GO" id="GO:0006656">
    <property type="term" value="P:phosphatidylcholine biosynthetic process"/>
    <property type="evidence" value="ECO:0007669"/>
    <property type="project" value="UniProtKB-UniRule"/>
</dbReference>
<dbReference type="FunFam" id="1.20.120.1630:FF:000016">
    <property type="entry name" value="Phosphatidylethanolamine N-methyltransferase"/>
    <property type="match status" value="1"/>
</dbReference>
<dbReference type="Gene3D" id="1.20.120.1630">
    <property type="match status" value="1"/>
</dbReference>
<dbReference type="Gene3D" id="2.60.40.2840">
    <property type="match status" value="1"/>
</dbReference>
<dbReference type="HAMAP" id="MF_03217">
    <property type="entry name" value="PEMT"/>
    <property type="match status" value="1"/>
</dbReference>
<dbReference type="InterPro" id="IPR007318">
    <property type="entry name" value="Phopholipid_MeTrfase"/>
</dbReference>
<dbReference type="InterPro" id="IPR016219">
    <property type="entry name" value="Phosphatid-EA_MeTrfase_fun"/>
</dbReference>
<dbReference type="PANTHER" id="PTHR32138">
    <property type="entry name" value="PHOSPHATIDYLETHANOLAMINE N-METHYLTRANSFERASE"/>
    <property type="match status" value="1"/>
</dbReference>
<dbReference type="PANTHER" id="PTHR32138:SF0">
    <property type="entry name" value="PHOSPHATIDYLETHANOLAMINE N-METHYLTRANSFERASE"/>
    <property type="match status" value="1"/>
</dbReference>
<dbReference type="Pfam" id="PF04191">
    <property type="entry name" value="PEMT"/>
    <property type="match status" value="2"/>
</dbReference>
<dbReference type="PIRSF" id="PIRSF000383">
    <property type="entry name" value="PEAMT"/>
    <property type="match status" value="1"/>
</dbReference>
<dbReference type="PROSITE" id="PS50244">
    <property type="entry name" value="S5A_REDUCTASE"/>
    <property type="match status" value="1"/>
</dbReference>
<dbReference type="PROSITE" id="PS51598">
    <property type="entry name" value="SAM_CHO2"/>
    <property type="match status" value="1"/>
</dbReference>